<protein>
    <recommendedName>
        <fullName evidence="1">Lipoate-protein ligase A</fullName>
        <ecNumber evidence="1">6.3.1.20</ecNumber>
    </recommendedName>
    <alternativeName>
        <fullName evidence="1">Lipoate--protein ligase</fullName>
    </alternativeName>
</protein>
<accession>B7LNS6</accession>
<organism>
    <name type="scientific">Escherichia fergusonii (strain ATCC 35469 / DSM 13698 / CCUG 18766 / IAM 14443 / JCM 21226 / LMG 7866 / NBRC 102419 / NCTC 12128 / CDC 0568-73)</name>
    <dbReference type="NCBI Taxonomy" id="585054"/>
    <lineage>
        <taxon>Bacteria</taxon>
        <taxon>Pseudomonadati</taxon>
        <taxon>Pseudomonadota</taxon>
        <taxon>Gammaproteobacteria</taxon>
        <taxon>Enterobacterales</taxon>
        <taxon>Enterobacteriaceae</taxon>
        <taxon>Escherichia</taxon>
    </lineage>
</organism>
<reference key="1">
    <citation type="journal article" date="2009" name="PLoS Genet.">
        <title>Organised genome dynamics in the Escherichia coli species results in highly diverse adaptive paths.</title>
        <authorList>
            <person name="Touchon M."/>
            <person name="Hoede C."/>
            <person name="Tenaillon O."/>
            <person name="Barbe V."/>
            <person name="Baeriswyl S."/>
            <person name="Bidet P."/>
            <person name="Bingen E."/>
            <person name="Bonacorsi S."/>
            <person name="Bouchier C."/>
            <person name="Bouvet O."/>
            <person name="Calteau A."/>
            <person name="Chiapello H."/>
            <person name="Clermont O."/>
            <person name="Cruveiller S."/>
            <person name="Danchin A."/>
            <person name="Diard M."/>
            <person name="Dossat C."/>
            <person name="Karoui M.E."/>
            <person name="Frapy E."/>
            <person name="Garry L."/>
            <person name="Ghigo J.M."/>
            <person name="Gilles A.M."/>
            <person name="Johnson J."/>
            <person name="Le Bouguenec C."/>
            <person name="Lescat M."/>
            <person name="Mangenot S."/>
            <person name="Martinez-Jehanne V."/>
            <person name="Matic I."/>
            <person name="Nassif X."/>
            <person name="Oztas S."/>
            <person name="Petit M.A."/>
            <person name="Pichon C."/>
            <person name="Rouy Z."/>
            <person name="Ruf C.S."/>
            <person name="Schneider D."/>
            <person name="Tourret J."/>
            <person name="Vacherie B."/>
            <person name="Vallenet D."/>
            <person name="Medigue C."/>
            <person name="Rocha E.P.C."/>
            <person name="Denamur E."/>
        </authorList>
    </citation>
    <scope>NUCLEOTIDE SEQUENCE [LARGE SCALE GENOMIC DNA]</scope>
    <source>
        <strain>ATCC 35469 / DSM 13698 / BCRC 15582 / CCUG 18766 / IAM 14443 / JCM 21226 / LMG 7866 / NBRC 102419 / NCTC 12128 / CDC 0568-73</strain>
    </source>
</reference>
<feature type="chain" id="PRO_1000148108" description="Lipoate-protein ligase A">
    <location>
        <begin position="1"/>
        <end position="338"/>
    </location>
</feature>
<feature type="domain" description="BPL/LPL catalytic" evidence="2">
    <location>
        <begin position="29"/>
        <end position="216"/>
    </location>
</feature>
<feature type="binding site" evidence="1">
    <location>
        <position position="71"/>
    </location>
    <ligand>
        <name>ATP</name>
        <dbReference type="ChEBI" id="CHEBI:30616"/>
    </ligand>
</feature>
<feature type="binding site" evidence="1">
    <location>
        <begin position="76"/>
        <end position="79"/>
    </location>
    <ligand>
        <name>ATP</name>
        <dbReference type="ChEBI" id="CHEBI:30616"/>
    </ligand>
</feature>
<feature type="binding site" evidence="1">
    <location>
        <position position="134"/>
    </location>
    <ligand>
        <name>(R)-lipoate</name>
        <dbReference type="ChEBI" id="CHEBI:83088"/>
    </ligand>
</feature>
<feature type="binding site" evidence="1">
    <location>
        <position position="134"/>
    </location>
    <ligand>
        <name>ATP</name>
        <dbReference type="ChEBI" id="CHEBI:30616"/>
    </ligand>
</feature>
<keyword id="KW-0067">ATP-binding</keyword>
<keyword id="KW-0963">Cytoplasm</keyword>
<keyword id="KW-0436">Ligase</keyword>
<keyword id="KW-0547">Nucleotide-binding</keyword>
<name>LPLA_ESCF3</name>
<sequence>MSTLRLLISDSYDPWFNLAVEECIFRQMPATQRVLFLWRNADTVVIGRAQNPWKECNTRRMEEDNVRLARRSSGGGAVFHDLGNTCFTFMAGKPEYDKTISTSIVLNALNALGVSAEASGRNDLVVKTAEGDRKVSGSAYRETKDRGFHHGTLLLNADLSRLANYLNPDKKKLAAKGITSVRSRVTNLTELLPGITHEQVCEAITEAFFAHYGERVEAEIISPDKTPDLPNFAETFARQSSWEWNFGQAPAFSHLLDERFTWGGVELHFDVEKGHITRAQVFTDSLNPAPLEALAGRLQGCLYRADMLQQECEALLVDFPEQEKELRELSAWMAGAVR</sequence>
<gene>
    <name evidence="1" type="primary">lplA</name>
    <name type="ordered locus">EFER_4483</name>
</gene>
<evidence type="ECO:0000255" key="1">
    <source>
        <dbReference type="HAMAP-Rule" id="MF_01602"/>
    </source>
</evidence>
<evidence type="ECO:0000255" key="2">
    <source>
        <dbReference type="PROSITE-ProRule" id="PRU01067"/>
    </source>
</evidence>
<proteinExistence type="inferred from homology"/>
<comment type="function">
    <text evidence="1">Catalyzes both the ATP-dependent activation of exogenously supplied lipoate to lipoyl-AMP and the transfer of the activated lipoyl onto the lipoyl domains of lipoate-dependent enzymes.</text>
</comment>
<comment type="catalytic activity">
    <reaction evidence="1">
        <text>L-lysyl-[lipoyl-carrier protein] + (R)-lipoate + ATP = N(6)-[(R)-lipoyl]-L-lysyl-[lipoyl-carrier protein] + AMP + diphosphate + H(+)</text>
        <dbReference type="Rhea" id="RHEA:49288"/>
        <dbReference type="Rhea" id="RHEA-COMP:10500"/>
        <dbReference type="Rhea" id="RHEA-COMP:10502"/>
        <dbReference type="ChEBI" id="CHEBI:15378"/>
        <dbReference type="ChEBI" id="CHEBI:29969"/>
        <dbReference type="ChEBI" id="CHEBI:30616"/>
        <dbReference type="ChEBI" id="CHEBI:33019"/>
        <dbReference type="ChEBI" id="CHEBI:83088"/>
        <dbReference type="ChEBI" id="CHEBI:83099"/>
        <dbReference type="ChEBI" id="CHEBI:456215"/>
        <dbReference type="EC" id="6.3.1.20"/>
    </reaction>
</comment>
<comment type="pathway">
    <text evidence="1">Protein modification; protein lipoylation via exogenous pathway; protein N(6)-(lipoyl)lysine from lipoate: step 1/2.</text>
</comment>
<comment type="pathway">
    <text evidence="1">Protein modification; protein lipoylation via exogenous pathway; protein N(6)-(lipoyl)lysine from lipoate: step 2/2.</text>
</comment>
<comment type="subunit">
    <text evidence="1">Monomer.</text>
</comment>
<comment type="subcellular location">
    <subcellularLocation>
        <location evidence="1">Cytoplasm</location>
    </subcellularLocation>
</comment>
<comment type="miscellaneous">
    <text evidence="1">In the transfer reaction, the free carboxyl group of lipoic acid is attached via an amide linkage to the epsilon-amino group of a specific lysine residue of lipoyl domains of lipoate-dependent enzymes.</text>
</comment>
<comment type="similarity">
    <text evidence="1">Belongs to the LplA family.</text>
</comment>
<dbReference type="EC" id="6.3.1.20" evidence="1"/>
<dbReference type="EMBL" id="CU928158">
    <property type="protein sequence ID" value="CAQ91896.1"/>
    <property type="molecule type" value="Genomic_DNA"/>
</dbReference>
<dbReference type="RefSeq" id="WP_000105850.1">
    <property type="nucleotide sequence ID" value="NC_011740.1"/>
</dbReference>
<dbReference type="SMR" id="B7LNS6"/>
<dbReference type="GeneID" id="75058930"/>
<dbReference type="KEGG" id="efe:EFER_4483"/>
<dbReference type="HOGENOM" id="CLU_022986_0_1_6"/>
<dbReference type="OrthoDB" id="9787898at2"/>
<dbReference type="UniPathway" id="UPA00537">
    <property type="reaction ID" value="UER00594"/>
</dbReference>
<dbReference type="UniPathway" id="UPA00537">
    <property type="reaction ID" value="UER00595"/>
</dbReference>
<dbReference type="Proteomes" id="UP000000745">
    <property type="component" value="Chromosome"/>
</dbReference>
<dbReference type="GO" id="GO:0005829">
    <property type="term" value="C:cytosol"/>
    <property type="evidence" value="ECO:0007669"/>
    <property type="project" value="TreeGrafter"/>
</dbReference>
<dbReference type="GO" id="GO:0005524">
    <property type="term" value="F:ATP binding"/>
    <property type="evidence" value="ECO:0007669"/>
    <property type="project" value="UniProtKB-KW"/>
</dbReference>
<dbReference type="GO" id="GO:0016979">
    <property type="term" value="F:lipoate-protein ligase activity"/>
    <property type="evidence" value="ECO:0007669"/>
    <property type="project" value="UniProtKB-UniRule"/>
</dbReference>
<dbReference type="GO" id="GO:0017118">
    <property type="term" value="F:lipoyltransferase activity"/>
    <property type="evidence" value="ECO:0007669"/>
    <property type="project" value="TreeGrafter"/>
</dbReference>
<dbReference type="GO" id="GO:0036211">
    <property type="term" value="P:protein modification process"/>
    <property type="evidence" value="ECO:0007669"/>
    <property type="project" value="InterPro"/>
</dbReference>
<dbReference type="CDD" id="cd16435">
    <property type="entry name" value="BPL_LplA_LipB"/>
    <property type="match status" value="1"/>
</dbReference>
<dbReference type="FunFam" id="3.30.390.50:FF:000002">
    <property type="entry name" value="Lipoate-protein ligase A"/>
    <property type="match status" value="1"/>
</dbReference>
<dbReference type="FunFam" id="3.30.930.10:FF:000024">
    <property type="entry name" value="Lipoate-protein ligase A"/>
    <property type="match status" value="1"/>
</dbReference>
<dbReference type="Gene3D" id="3.30.930.10">
    <property type="entry name" value="Bira Bifunctional Protein, Domain 2"/>
    <property type="match status" value="1"/>
</dbReference>
<dbReference type="Gene3D" id="3.30.390.50">
    <property type="entry name" value="CO dehydrogenase flavoprotein, C-terminal domain"/>
    <property type="match status" value="1"/>
</dbReference>
<dbReference type="HAMAP" id="MF_01602">
    <property type="entry name" value="LplA"/>
    <property type="match status" value="1"/>
</dbReference>
<dbReference type="InterPro" id="IPR045864">
    <property type="entry name" value="aa-tRNA-synth_II/BPL/LPL"/>
</dbReference>
<dbReference type="InterPro" id="IPR004143">
    <property type="entry name" value="BPL_LPL_catalytic"/>
</dbReference>
<dbReference type="InterPro" id="IPR023741">
    <property type="entry name" value="Lipoate_ligase_A"/>
</dbReference>
<dbReference type="InterPro" id="IPR019491">
    <property type="entry name" value="Lipoate_protein_ligase_C"/>
</dbReference>
<dbReference type="InterPro" id="IPR004562">
    <property type="entry name" value="LipoylTrfase_LipoateP_Ligase"/>
</dbReference>
<dbReference type="NCBIfam" id="TIGR00545">
    <property type="entry name" value="lipoyltrans"/>
    <property type="match status" value="1"/>
</dbReference>
<dbReference type="PANTHER" id="PTHR12561">
    <property type="entry name" value="LIPOATE-PROTEIN LIGASE"/>
    <property type="match status" value="1"/>
</dbReference>
<dbReference type="PANTHER" id="PTHR12561:SF3">
    <property type="entry name" value="LIPOYLTRANSFERASE 1, MITOCHONDRIAL"/>
    <property type="match status" value="1"/>
</dbReference>
<dbReference type="Pfam" id="PF10437">
    <property type="entry name" value="Lip_prot_lig_C"/>
    <property type="match status" value="1"/>
</dbReference>
<dbReference type="Pfam" id="PF21948">
    <property type="entry name" value="LplA-B_cat"/>
    <property type="match status" value="1"/>
</dbReference>
<dbReference type="SUPFAM" id="SSF55681">
    <property type="entry name" value="Class II aaRS and biotin synthetases"/>
    <property type="match status" value="1"/>
</dbReference>
<dbReference type="SUPFAM" id="SSF82649">
    <property type="entry name" value="SufE/NifU"/>
    <property type="match status" value="1"/>
</dbReference>
<dbReference type="PROSITE" id="PS51733">
    <property type="entry name" value="BPL_LPL_CATALYTIC"/>
    <property type="match status" value="1"/>
</dbReference>